<keyword id="KW-0002">3D-structure</keyword>
<keyword id="KW-0430">Lectin</keyword>
<keyword id="KW-1185">Reference proteome</keyword>
<keyword id="KW-0677">Repeat</keyword>
<protein>
    <recommendedName>
        <fullName evidence="9">Fucose-specific lectin</fullName>
    </recommendedName>
    <alternativeName>
        <fullName evidence="9">Aspergillus oryzea lectin</fullName>
        <shortName evidence="9">AOL</shortName>
    </alternativeName>
</protein>
<reference key="1">
    <citation type="journal article" date="2005" name="Nature">
        <title>Genome sequencing and analysis of Aspergillus oryzae.</title>
        <authorList>
            <person name="Machida M."/>
            <person name="Asai K."/>
            <person name="Sano M."/>
            <person name="Tanaka T."/>
            <person name="Kumagai T."/>
            <person name="Terai G."/>
            <person name="Kusumoto K."/>
            <person name="Arima T."/>
            <person name="Akita O."/>
            <person name="Kashiwagi Y."/>
            <person name="Abe K."/>
            <person name="Gomi K."/>
            <person name="Horiuchi H."/>
            <person name="Kitamoto K."/>
            <person name="Kobayashi T."/>
            <person name="Takeuchi M."/>
            <person name="Denning D.W."/>
            <person name="Galagan J.E."/>
            <person name="Nierman W.C."/>
            <person name="Yu J."/>
            <person name="Archer D.B."/>
            <person name="Bennett J.W."/>
            <person name="Bhatnagar D."/>
            <person name="Cleveland T.E."/>
            <person name="Fedorova N.D."/>
            <person name="Gotoh O."/>
            <person name="Horikawa H."/>
            <person name="Hosoyama A."/>
            <person name="Ichinomiya M."/>
            <person name="Igarashi R."/>
            <person name="Iwashita K."/>
            <person name="Juvvadi P.R."/>
            <person name="Kato M."/>
            <person name="Kato Y."/>
            <person name="Kin T."/>
            <person name="Kokubun A."/>
            <person name="Maeda H."/>
            <person name="Maeyama N."/>
            <person name="Maruyama J."/>
            <person name="Nagasaki H."/>
            <person name="Nakajima T."/>
            <person name="Oda K."/>
            <person name="Okada K."/>
            <person name="Paulsen I."/>
            <person name="Sakamoto K."/>
            <person name="Sawano T."/>
            <person name="Takahashi M."/>
            <person name="Takase K."/>
            <person name="Terabayashi Y."/>
            <person name="Wortman J.R."/>
            <person name="Yamada O."/>
            <person name="Yamagata Y."/>
            <person name="Anazawa H."/>
            <person name="Hata Y."/>
            <person name="Koide Y."/>
            <person name="Komori T."/>
            <person name="Koyama Y."/>
            <person name="Minetoki T."/>
            <person name="Suharnan S."/>
            <person name="Tanaka A."/>
            <person name="Isono K."/>
            <person name="Kuhara S."/>
            <person name="Ogasawara N."/>
            <person name="Kikuchi H."/>
        </authorList>
    </citation>
    <scope>NUCLEOTIDE SEQUENCE [LARGE SCALE GENOMIC DNA]</scope>
    <source>
        <strain>ATCC 42149 / RIB 40</strain>
    </source>
</reference>
<reference key="2">
    <citation type="journal article" date="2002" name="Biosci. Biotechnol. Biochem.">
        <title>Molecular cloning and overexpression of fleA gene encoding a fucose-specific lectin of Aspergillus oryzae.</title>
        <authorList>
            <person name="Ishida H."/>
            <person name="Moritani T."/>
            <person name="Hata Y."/>
            <person name="Kawato A."/>
            <person name="Suginami K."/>
            <person name="Abe Y."/>
            <person name="Imayasu S."/>
        </authorList>
    </citation>
    <scope>FUNCTION</scope>
</reference>
<reference key="3">
    <citation type="journal article" date="2007" name="J. Biol. Chem.">
        <title>Carbohydrate binding specificity of a fucose-specific lectin from Aspergillus oryzae: a novel probe for core fucose.</title>
        <authorList>
            <person name="Matsumura K."/>
            <person name="Higashida K."/>
            <person name="Ishida H."/>
            <person name="Hata Y."/>
            <person name="Yamamoto K."/>
            <person name="Shigeta M."/>
            <person name="Mizuno-Horikawa Y."/>
            <person name="Wang X."/>
            <person name="Miyoshi E."/>
            <person name="Gu J."/>
            <person name="Taniguchi N."/>
        </authorList>
    </citation>
    <scope>FUNCTION</scope>
    <scope>SUBUNIT</scope>
    <scope>BIOTECHNOLOGY</scope>
</reference>
<reference key="4">
    <citation type="journal article" date="2009" name="Anal. Biochem.">
        <title>Comparative analysis of oligosaccharide specificities of fucose-specific lectins from Aspergillus oryzae and Aleuria aurantia using frontal affinity chromatography.</title>
        <authorList>
            <person name="Matsumura K."/>
            <person name="Higashida K."/>
            <person name="Hata Y."/>
            <person name="Kominami J."/>
            <person name="Nakamura-Tsuruta S."/>
            <person name="Hirabayashi J."/>
        </authorList>
    </citation>
    <scope>FUNCTION</scope>
</reference>
<reference key="5">
    <citation type="journal article" date="2011" name="Scand. J. Immunol.">
        <title>Aspergillus oryzae lectin induces anaphylactoid oedema and mast cell activation through its interaction with fucose of mast cell-bound non-specific IgE.</title>
        <authorList>
            <person name="Yamaki K."/>
            <person name="Yoshino S."/>
        </authorList>
    </citation>
    <scope>FUNCTION</scope>
</reference>
<reference key="6">
    <citation type="journal article" date="2012" name="Appl. Microbiol. Biotechnol.">
        <title>Development of fluorescent probes for the detection of fucosylated N-glycans using an Aspergillus oryzae lectin.</title>
        <authorList>
            <person name="Mun J.Y."/>
            <person name="Lee K.J."/>
            <person name="Kim Y.J."/>
            <person name="Kwon O."/>
            <person name="Kim S.J."/>
            <person name="Lee S.G."/>
            <person name="Park W.S."/>
            <person name="Heo W.D."/>
            <person name="Oh D.B."/>
        </authorList>
    </citation>
    <scope>BIOTECHNOLOGY</scope>
</reference>
<reference key="7">
    <citation type="journal article" date="2017" name="Mol. Cell. Biochem.">
        <title>Mitogenic lectins from Cephalosporium curvulum (CSL) and Aspergillus oryzae (AOL) mediate host-pathogen interactions leading to mycotic keratitis.</title>
        <authorList>
            <person name="Ballal S."/>
            <person name="Belur S."/>
            <person name="Laha P."/>
            <person name="Roy S."/>
            <person name="Swamy B.M."/>
            <person name="Inamdar S.R."/>
        </authorList>
    </citation>
    <scope>FUNCTION</scope>
</reference>
<reference key="8">
    <citation type="journal article" date="2016" name="Biochem. Biophys. Res. Commun.">
        <title>Six independent fucose-binding sites in the crystal structure of Aspergillus oryzae lectin.</title>
        <authorList>
            <person name="Makyio H."/>
            <person name="Shimabukuro J."/>
            <person name="Suzuki T."/>
            <person name="Imamura A."/>
            <person name="Ishida H."/>
            <person name="Kiso M."/>
            <person name="Ando H."/>
            <person name="Kato R."/>
        </authorList>
    </citation>
    <scope>X-RAY CRYSTALLOGRAPHY (1.60 ANGSTROMS) IN COMPLEX WITH SELENO-FUCOSIDES</scope>
    <scope>FUNCTION</scope>
    <scope>DOMAIN</scope>
</reference>
<reference key="9">
    <citation type="journal article" date="2017" name="Bioorg. Med. Chem.">
        <title>Synthesis of seleno-fucose compounds and their application to the X-ray structural determination of carbohydrate-lectin complexes using single/multi-wavelength anomalous dispersion phasing.</title>
        <authorList>
            <person name="Shimabukuro J."/>
            <person name="Makyio H."/>
            <person name="Suzuki T."/>
            <person name="Nishikawa Y."/>
            <person name="Kawasaki M."/>
            <person name="Imamura A."/>
            <person name="Ishida H."/>
            <person name="Ando H."/>
            <person name="Kato R."/>
            <person name="Kiso M."/>
        </authorList>
    </citation>
    <scope>X-RAY CRYSTALLOGRAPHY (2.30 ANGSTROMS) IN COMPLEX WITH SELENO-FUCOSIDES</scope>
    <scope>FUNCTION</scope>
    <scope>DOMAIN</scope>
</reference>
<name>LECF_ASPOR</name>
<proteinExistence type="evidence at protein level"/>
<evidence type="ECO:0000269" key="1">
    <source>
    </source>
</evidence>
<evidence type="ECO:0000269" key="2">
    <source>
    </source>
</evidence>
<evidence type="ECO:0000269" key="3">
    <source>
    </source>
</evidence>
<evidence type="ECO:0000269" key="4">
    <source>
    </source>
</evidence>
<evidence type="ECO:0000269" key="5">
    <source>
    </source>
</evidence>
<evidence type="ECO:0000269" key="6">
    <source>
    </source>
</evidence>
<evidence type="ECO:0000269" key="7">
    <source>
    </source>
</evidence>
<evidence type="ECO:0000269" key="8">
    <source>
    </source>
</evidence>
<evidence type="ECO:0000303" key="9">
    <source>
    </source>
</evidence>
<evidence type="ECO:0000305" key="10"/>
<evidence type="ECO:0000305" key="11">
    <source>
    </source>
</evidence>
<evidence type="ECO:0007744" key="12">
    <source>
        <dbReference type="PDB" id="5EO8"/>
    </source>
</evidence>
<evidence type="ECO:0007744" key="13">
    <source>
        <dbReference type="PDB" id="5H47"/>
    </source>
</evidence>
<evidence type="ECO:0007829" key="14">
    <source>
        <dbReference type="PDB" id="5EO7"/>
    </source>
</evidence>
<evidence type="ECO:0007829" key="15">
    <source>
        <dbReference type="PDB" id="5EO8"/>
    </source>
</evidence>
<organism>
    <name type="scientific">Aspergillus oryzae (strain ATCC 42149 / RIB 40)</name>
    <name type="common">Yellow koji mold</name>
    <dbReference type="NCBI Taxonomy" id="510516"/>
    <lineage>
        <taxon>Eukaryota</taxon>
        <taxon>Fungi</taxon>
        <taxon>Dikarya</taxon>
        <taxon>Ascomycota</taxon>
        <taxon>Pezizomycotina</taxon>
        <taxon>Eurotiomycetes</taxon>
        <taxon>Eurotiomycetidae</taxon>
        <taxon>Eurotiales</taxon>
        <taxon>Aspergillaceae</taxon>
        <taxon>Aspergillus</taxon>
        <taxon>Aspergillus subgen. Circumdati</taxon>
    </lineage>
</organism>
<dbReference type="EMBL" id="BA000050">
    <property type="protein sequence ID" value="BAE56737.1"/>
    <property type="molecule type" value="Genomic_DNA"/>
</dbReference>
<dbReference type="RefSeq" id="XP_001818739.1">
    <property type="nucleotide sequence ID" value="XM_001818687.2"/>
</dbReference>
<dbReference type="PDB" id="5EO7">
    <property type="method" value="X-ray"/>
    <property type="resolution" value="2.30 A"/>
    <property type="chains" value="A/B/C=2-311"/>
</dbReference>
<dbReference type="PDB" id="5EO8">
    <property type="method" value="X-ray"/>
    <property type="resolution" value="1.60 A"/>
    <property type="chains" value="A=1-311"/>
</dbReference>
<dbReference type="PDB" id="5H47">
    <property type="method" value="X-ray"/>
    <property type="resolution" value="2.30 A"/>
    <property type="chains" value="A/B/C/D/E/F/G/H/I/J/K/L=1-311"/>
</dbReference>
<dbReference type="PDBsum" id="5EO7"/>
<dbReference type="PDBsum" id="5EO8"/>
<dbReference type="PDBsum" id="5H47"/>
<dbReference type="SMR" id="Q2UNX8"/>
<dbReference type="STRING" id="510516.Q2UNX8"/>
<dbReference type="UniLectin" id="Q2UNX8"/>
<dbReference type="EnsemblFungi" id="BAE56737">
    <property type="protein sequence ID" value="BAE56737"/>
    <property type="gene ID" value="AO090001000189"/>
</dbReference>
<dbReference type="GeneID" id="5990710"/>
<dbReference type="KEGG" id="aor:AO090001000189"/>
<dbReference type="VEuPathDB" id="FungiDB:AO090001000189"/>
<dbReference type="HOGENOM" id="CLU_057373_0_0_1"/>
<dbReference type="OMA" id="VFNIRLY"/>
<dbReference type="OrthoDB" id="99053at5052"/>
<dbReference type="Proteomes" id="UP000006564">
    <property type="component" value="Chromosome 2"/>
</dbReference>
<dbReference type="GO" id="GO:0005769">
    <property type="term" value="C:early endosome"/>
    <property type="evidence" value="ECO:0000314"/>
    <property type="project" value="AspGD"/>
</dbReference>
<dbReference type="GO" id="GO:0042806">
    <property type="term" value="F:fucose binding"/>
    <property type="evidence" value="ECO:0000314"/>
    <property type="project" value="AspGD"/>
</dbReference>
<dbReference type="FunFam" id="2.120.10.70:FF:000001">
    <property type="entry name" value="Fucose-specific lectin"/>
    <property type="match status" value="1"/>
</dbReference>
<dbReference type="Gene3D" id="2.120.10.70">
    <property type="entry name" value="Fucose-specific lectin"/>
    <property type="match status" value="1"/>
</dbReference>
<dbReference type="InterPro" id="IPR012475">
    <property type="entry name" value="Fungal_lectin"/>
</dbReference>
<dbReference type="Pfam" id="PF07938">
    <property type="entry name" value="Fungal_lectin"/>
    <property type="match status" value="1"/>
</dbReference>
<dbReference type="SUPFAM" id="SSF89372">
    <property type="entry name" value="Fucose-specific lectin"/>
    <property type="match status" value="1"/>
</dbReference>
<comment type="function">
    <text evidence="1 2 3 4 6 7 8">Lectin that specifically binds to L-fucose and weakly reacts with mannose and N-acetyl-neuraminic acid (PubMed:12092808, PubMed:27318092, PubMed:28041800). Has strongest preference for the alpha-1,6-fucosylated chain (core fucose) on glycoproteins among alpha-1,2-, alpha-1,3-, alpha-1,4-, and alpha-1,6-fucosylated chains (PubMed:17383961, PubMed:19109923). Binds to fucose residues of IgE in mice and human, causing antigen-independent IgE-mediated mast cell activation and anaphylactoid reactions in mice and is possibly implicated in allergic response to Aspergillus oryzae in humans (PubMed:21790704). Induces secretion of pro-inflammatory cytokines IL6 and IL8 implicated in ocular diseases such as mycotic keratitis, probably through its interaction with host toll-like receptors TLR2 and TLR4, followed by up-regulation of pro-inflammatory cytokines (PubMed:28470344).</text>
</comment>
<comment type="subunit">
    <text evidence="2">Homodimer (PubMed:17383961).</text>
</comment>
<comment type="domain">
    <text evidence="6 7">AOL adopts the six-bladed beta-propeller fold and contains 6 binding sites per monomer, each located between two adjacent blades (PubMed:27318092, PubMed:28041800). The 6 binding sites that are non-equivalent, and owing to minor differences in amino-acid composition they exhibit a marked difference in specific ligand recognition (PubMed:27318092, PubMed:28041800).</text>
</comment>
<comment type="biotechnology">
    <text evidence="5 11">Lectins have particular value as specific probes for investigating the distribution, structure and biological function of carbohydrate chains on the cell surface of animal, plant, and microorganism because of their specificity for defined carbohydrate structures (PubMed:17383961). FleA is suitable for detecting core fucose on cell surface glycoproteins and/or a useful vehicle for delivery of substances to the inside of cells (PubMed:17383961, PubMed:21892597).</text>
</comment>
<comment type="similarity">
    <text evidence="10">Belongs to the fungal fucose-specific lectin family.</text>
</comment>
<sequence>MSTPGAQEVLFRTGIAAVNSTNHLRVYFQDSHGSIRESLYESGWANGTAKNVIAKAKLGTPLAATSKELKNIRVYSLTEDNVLQEAAYDSGSGWYNGALAGAKFTVAPYSRIGSVFLAGTNALQLRIYAQKTDNTIQEYMWNGDGWKEGTNLGVALPGTGIGVTCWRYTDYDGPSIRVWFQTDNLKLVQRAYDPHTGWYKELTTIFDKAPPRCAIAATNFNPGKSSIYMRIYFVNSDNTIWQVCWDHGQGYHDKRTITPVIQGSEIAIISWEGPELRLYFQNGTYVSAISEWTWGKAHGSQLGRRALPPAE</sequence>
<feature type="chain" id="PRO_0000442743" description="Fucose-specific lectin">
    <location>
        <begin position="1"/>
        <end position="311"/>
    </location>
</feature>
<feature type="repeat" description="1" evidence="10">
    <location>
        <begin position="1"/>
        <end position="53"/>
    </location>
</feature>
<feature type="repeat" description="2" evidence="10">
    <location>
        <begin position="54"/>
        <end position="103"/>
    </location>
</feature>
<feature type="repeat" description="3" evidence="10">
    <location>
        <begin position="104"/>
        <end position="151"/>
    </location>
</feature>
<feature type="repeat" description="4" evidence="10">
    <location>
        <begin position="152"/>
        <end position="209"/>
    </location>
</feature>
<feature type="repeat" description="5" evidence="10">
    <location>
        <begin position="210"/>
        <end position="256"/>
    </location>
</feature>
<feature type="repeat" description="6" evidence="10">
    <location>
        <begin position="257"/>
        <end position="311"/>
    </location>
</feature>
<feature type="region of interest" description="6 X approximate tandem repeats" evidence="10">
    <location>
        <begin position="1"/>
        <end position="311"/>
    </location>
</feature>
<feature type="binding site" evidence="6 7 12 13">
    <location>
        <position position="25"/>
    </location>
    <ligand>
        <name>beta-L-fucose</name>
        <dbReference type="ChEBI" id="CHEBI:42589"/>
        <label>1</label>
    </ligand>
</feature>
<feature type="binding site" evidence="6 7 12 13">
    <location>
        <position position="37"/>
    </location>
    <ligand>
        <name>beta-L-fucose</name>
        <dbReference type="ChEBI" id="CHEBI:42589"/>
        <label>1</label>
    </ligand>
</feature>
<feature type="binding site" evidence="6 7 12 13">
    <location>
        <position position="44"/>
    </location>
    <ligand>
        <name>beta-L-fucose</name>
        <dbReference type="ChEBI" id="CHEBI:42589"/>
        <label>6</label>
    </ligand>
</feature>
<feature type="binding site" evidence="6 7 12 13">
    <location>
        <position position="73"/>
    </location>
    <ligand>
        <name>beta-L-fucose</name>
        <dbReference type="ChEBI" id="CHEBI:42589"/>
        <label>2</label>
    </ligand>
</feature>
<feature type="binding site" evidence="6 7 12 13">
    <location>
        <position position="85"/>
    </location>
    <ligand>
        <name>beta-L-fucose</name>
        <dbReference type="ChEBI" id="CHEBI:42589"/>
        <label>2</label>
    </ligand>
</feature>
<feature type="binding site" evidence="6 7 12 13">
    <location>
        <position position="94"/>
    </location>
    <ligand>
        <name>beta-L-fucose</name>
        <dbReference type="ChEBI" id="CHEBI:42589"/>
        <label>1</label>
    </ligand>
</feature>
<feature type="binding site" evidence="6 7 12 13">
    <location>
        <position position="126"/>
    </location>
    <ligand>
        <name>beta-L-fucose</name>
        <dbReference type="ChEBI" id="CHEBI:42589"/>
        <label>3</label>
    </ligand>
</feature>
<feature type="binding site" evidence="6 7 12 13">
    <location>
        <position position="138"/>
    </location>
    <ligand>
        <name>beta-L-fucose</name>
        <dbReference type="ChEBI" id="CHEBI:42589"/>
        <label>3</label>
    </ligand>
</feature>
<feature type="binding site" evidence="6 7 12 13">
    <location>
        <position position="146"/>
    </location>
    <ligand>
        <name>beta-L-fucose</name>
        <dbReference type="ChEBI" id="CHEBI:42589"/>
        <label>2</label>
    </ligand>
</feature>
<feature type="binding site" evidence="6 7 12 13">
    <location>
        <position position="177"/>
    </location>
    <ligand>
        <name>beta-L-fucose</name>
        <dbReference type="ChEBI" id="CHEBI:42589"/>
        <label>4</label>
    </ligand>
</feature>
<feature type="binding site" evidence="6 7 12 13">
    <location>
        <position position="189"/>
    </location>
    <ligand>
        <name>beta-L-fucose</name>
        <dbReference type="ChEBI" id="CHEBI:42589"/>
        <label>4</label>
    </ligand>
</feature>
<feature type="binding site" evidence="6 7 12 13">
    <location>
        <position position="198"/>
    </location>
    <ligand>
        <name>beta-L-fucose</name>
        <dbReference type="ChEBI" id="CHEBI:42589"/>
        <label>3</label>
    </ligand>
</feature>
<feature type="binding site" evidence="6 7 12 13">
    <location>
        <position position="230"/>
    </location>
    <ligand>
        <name>beta-L-fucose</name>
        <dbReference type="ChEBI" id="CHEBI:42589"/>
        <label>5</label>
    </ligand>
</feature>
<feature type="binding site" evidence="6 7 12 13">
    <location>
        <position position="242"/>
    </location>
    <ligand>
        <name>beta-L-fucose</name>
        <dbReference type="ChEBI" id="CHEBI:42589"/>
        <label>5</label>
    </ligand>
</feature>
<feature type="binding site" evidence="6 7 12 13">
    <location>
        <position position="277"/>
    </location>
    <ligand>
        <name>beta-L-fucose</name>
        <dbReference type="ChEBI" id="CHEBI:42589"/>
        <label>6</label>
    </ligand>
</feature>
<feature type="binding site" evidence="6 7 12 13">
    <location>
        <position position="291"/>
    </location>
    <ligand>
        <name>beta-L-fucose</name>
        <dbReference type="ChEBI" id="CHEBI:42589"/>
        <label>6</label>
    </ligand>
</feature>
<feature type="helix" evidence="15">
    <location>
        <begin position="6"/>
        <end position="8"/>
    </location>
</feature>
<feature type="strand" evidence="15">
    <location>
        <begin position="15"/>
        <end position="20"/>
    </location>
</feature>
<feature type="strand" evidence="15">
    <location>
        <begin position="23"/>
        <end position="30"/>
    </location>
</feature>
<feature type="strand" evidence="15">
    <location>
        <begin position="33"/>
        <end position="46"/>
    </location>
</feature>
<feature type="helix" evidence="14">
    <location>
        <begin position="49"/>
        <end position="51"/>
    </location>
</feature>
<feature type="strand" evidence="15">
    <location>
        <begin position="52"/>
        <end position="55"/>
    </location>
</feature>
<feature type="strand" evidence="15">
    <location>
        <begin position="63"/>
        <end position="67"/>
    </location>
</feature>
<feature type="turn" evidence="15">
    <location>
        <begin position="68"/>
        <end position="70"/>
    </location>
</feature>
<feature type="strand" evidence="15">
    <location>
        <begin position="71"/>
        <end position="77"/>
    </location>
</feature>
<feature type="strand" evidence="15">
    <location>
        <begin position="82"/>
        <end position="89"/>
    </location>
</feature>
<feature type="turn" evidence="15">
    <location>
        <begin position="90"/>
        <end position="92"/>
    </location>
</feature>
<feature type="strand" evidence="15">
    <location>
        <begin position="93"/>
        <end position="96"/>
    </location>
</feature>
<feature type="helix" evidence="15">
    <location>
        <begin position="98"/>
        <end position="102"/>
    </location>
</feature>
<feature type="strand" evidence="15">
    <location>
        <begin position="112"/>
        <end position="116"/>
    </location>
</feature>
<feature type="strand" evidence="15">
    <location>
        <begin position="118"/>
        <end position="122"/>
    </location>
</feature>
<feature type="strand" evidence="15">
    <location>
        <begin position="125"/>
        <end position="130"/>
    </location>
</feature>
<feature type="strand" evidence="15">
    <location>
        <begin position="134"/>
        <end position="144"/>
    </location>
</feature>
<feature type="strand" evidence="15">
    <location>
        <begin position="146"/>
        <end position="154"/>
    </location>
</feature>
<feature type="strand" evidence="15">
    <location>
        <begin position="161"/>
        <end position="166"/>
    </location>
</feature>
<feature type="strand" evidence="14">
    <location>
        <begin position="169"/>
        <end position="173"/>
    </location>
</feature>
<feature type="strand" evidence="15">
    <location>
        <begin position="175"/>
        <end position="181"/>
    </location>
</feature>
<feature type="strand" evidence="15">
    <location>
        <begin position="187"/>
        <end position="193"/>
    </location>
</feature>
<feature type="turn" evidence="15">
    <location>
        <begin position="194"/>
        <end position="196"/>
    </location>
</feature>
<feature type="strand" evidence="15">
    <location>
        <begin position="203"/>
        <end position="207"/>
    </location>
</feature>
<feature type="strand" evidence="15">
    <location>
        <begin position="215"/>
        <end position="220"/>
    </location>
</feature>
<feature type="strand" evidence="15">
    <location>
        <begin position="228"/>
        <end position="234"/>
    </location>
</feature>
<feature type="strand" evidence="15">
    <location>
        <begin position="238"/>
        <end position="246"/>
    </location>
</feature>
<feature type="turn" evidence="15">
    <location>
        <begin position="247"/>
        <end position="249"/>
    </location>
</feature>
<feature type="strand" evidence="15">
    <location>
        <begin position="250"/>
        <end position="259"/>
    </location>
</feature>
<feature type="strand" evidence="15">
    <location>
        <begin position="267"/>
        <end position="271"/>
    </location>
</feature>
<feature type="turn" evidence="15">
    <location>
        <begin position="272"/>
        <end position="274"/>
    </location>
</feature>
<feature type="strand" evidence="15">
    <location>
        <begin position="275"/>
        <end position="280"/>
    </location>
</feature>
<feature type="turn" evidence="15">
    <location>
        <begin position="284"/>
        <end position="287"/>
    </location>
</feature>
<feature type="strand" evidence="15">
    <location>
        <begin position="290"/>
        <end position="295"/>
    </location>
</feature>
<feature type="turn" evidence="15">
    <location>
        <begin position="296"/>
        <end position="298"/>
    </location>
</feature>
<feature type="strand" evidence="15">
    <location>
        <begin position="299"/>
        <end position="302"/>
    </location>
</feature>
<accession>Q2UNX8</accession>
<gene>
    <name evidence="9" type="primary">fleA</name>
    <name type="ORF">AO090001000189</name>
</gene>